<protein>
    <recommendedName>
        <fullName evidence="1">Ribosomal RNA small subunit methyltransferase F</fullName>
        <ecNumber evidence="1">2.1.1.178</ecNumber>
    </recommendedName>
    <alternativeName>
        <fullName evidence="1">16S rRNA m5C1407 methyltransferase</fullName>
    </alternativeName>
    <alternativeName>
        <fullName evidence="1">rRNA (cytosine-C(5)-)-methyltransferase RsmF</fullName>
    </alternativeName>
</protein>
<sequence>MAQLNTNFINHIEKELPAHLSLQEFIAYCDKPLRKSIRVNTLKISTAQFVHIMTSAGWQLSPVPWCADGFWIEGKDDIQLGNAIEHIQGLFYIQEASSMLPPTALFSNDNTAEIVLDVASAPGSKATQIAALMNNSGLLVANEYSASRVKVLHANVLRMGASHTALTHFDGRVYGEYLYESFDAILLDAPCGGEGTVRKDPLALKHWDIDDVTAIGETQKDLIESAFLALKPGGILVYSTCTLSQLENQHICYHLQQTYPDAVEFESLAELFDGADKACTEEGFLHVWPQIYDSEGFFVAKIRKKASVERVKKQPKLQKNFPFNPANEKQKAELTQYFYDSFCLELPSDDVIMLRDDEYWLFPAQFMPFIGKMRFQRIGIKLADAMKKGYKAKHEAVIALSAATHNPAKTMELSAAQAQDFLMGRDIATSTFDQPTQQQLAIMPQGEMLVSYHKVVLGVVKHLGHRLKNNLPRDLVRDNVNLYL</sequence>
<comment type="function">
    <text evidence="1">Specifically methylates the cytosine at position 1407 (m5C1407) of 16S rRNA.</text>
</comment>
<comment type="catalytic activity">
    <reaction evidence="1">
        <text>cytidine(1407) in 16S rRNA + S-adenosyl-L-methionine = 5-methylcytidine(1407) in 16S rRNA + S-adenosyl-L-homocysteine + H(+)</text>
        <dbReference type="Rhea" id="RHEA:42756"/>
        <dbReference type="Rhea" id="RHEA-COMP:10223"/>
        <dbReference type="Rhea" id="RHEA-COMP:10224"/>
        <dbReference type="ChEBI" id="CHEBI:15378"/>
        <dbReference type="ChEBI" id="CHEBI:57856"/>
        <dbReference type="ChEBI" id="CHEBI:59789"/>
        <dbReference type="ChEBI" id="CHEBI:74483"/>
        <dbReference type="ChEBI" id="CHEBI:82748"/>
        <dbReference type="EC" id="2.1.1.178"/>
    </reaction>
</comment>
<comment type="subcellular location">
    <subcellularLocation>
        <location evidence="1">Cytoplasm</location>
    </subcellularLocation>
</comment>
<comment type="similarity">
    <text evidence="1">Belongs to the class I-like SAM-binding methyltransferase superfamily. RsmB/NOP family.</text>
</comment>
<feature type="chain" id="PRO_0000285011" description="Ribosomal RNA small subunit methyltransferase F">
    <location>
        <begin position="1"/>
        <end position="484"/>
    </location>
</feature>
<feature type="active site" description="Nucleophile" evidence="1">
    <location>
        <position position="241"/>
    </location>
</feature>
<feature type="binding site" evidence="1">
    <location>
        <begin position="119"/>
        <end position="125"/>
    </location>
    <ligand>
        <name>S-adenosyl-L-methionine</name>
        <dbReference type="ChEBI" id="CHEBI:59789"/>
    </ligand>
</feature>
<feature type="binding site" evidence="1">
    <location>
        <position position="143"/>
    </location>
    <ligand>
        <name>S-adenosyl-L-methionine</name>
        <dbReference type="ChEBI" id="CHEBI:59789"/>
    </ligand>
</feature>
<feature type="binding site" evidence="1">
    <location>
        <position position="170"/>
    </location>
    <ligand>
        <name>S-adenosyl-L-methionine</name>
        <dbReference type="ChEBI" id="CHEBI:59789"/>
    </ligand>
</feature>
<feature type="binding site" evidence="1">
    <location>
        <position position="188"/>
    </location>
    <ligand>
        <name>S-adenosyl-L-methionine</name>
        <dbReference type="ChEBI" id="CHEBI:59789"/>
    </ligand>
</feature>
<name>RSMF_SHEFN</name>
<accession>Q081I3</accession>
<dbReference type="EC" id="2.1.1.178" evidence="1"/>
<dbReference type="EMBL" id="CP000447">
    <property type="protein sequence ID" value="ABI72082.1"/>
    <property type="molecule type" value="Genomic_DNA"/>
</dbReference>
<dbReference type="RefSeq" id="WP_011637692.1">
    <property type="nucleotide sequence ID" value="NC_008345.1"/>
</dbReference>
<dbReference type="SMR" id="Q081I3"/>
<dbReference type="STRING" id="318167.Sfri_2236"/>
<dbReference type="KEGG" id="sfr:Sfri_2236"/>
<dbReference type="eggNOG" id="COG0144">
    <property type="taxonomic scope" value="Bacteria"/>
</dbReference>
<dbReference type="eggNOG" id="COG3270">
    <property type="taxonomic scope" value="Bacteria"/>
</dbReference>
<dbReference type="HOGENOM" id="CLU_005316_6_2_6"/>
<dbReference type="OrthoDB" id="9810297at2"/>
<dbReference type="Proteomes" id="UP000000684">
    <property type="component" value="Chromosome"/>
</dbReference>
<dbReference type="GO" id="GO:0005737">
    <property type="term" value="C:cytoplasm"/>
    <property type="evidence" value="ECO:0007669"/>
    <property type="project" value="UniProtKB-SubCell"/>
</dbReference>
<dbReference type="GO" id="GO:0003723">
    <property type="term" value="F:RNA binding"/>
    <property type="evidence" value="ECO:0007669"/>
    <property type="project" value="UniProtKB-KW"/>
</dbReference>
<dbReference type="GO" id="GO:0009383">
    <property type="term" value="F:rRNA (cytosine-C5-)-methyltransferase activity"/>
    <property type="evidence" value="ECO:0007669"/>
    <property type="project" value="TreeGrafter"/>
</dbReference>
<dbReference type="GO" id="GO:0070475">
    <property type="term" value="P:rRNA base methylation"/>
    <property type="evidence" value="ECO:0007669"/>
    <property type="project" value="TreeGrafter"/>
</dbReference>
<dbReference type="CDD" id="cd02440">
    <property type="entry name" value="AdoMet_MTases"/>
    <property type="match status" value="1"/>
</dbReference>
<dbReference type="Gene3D" id="3.10.450.720">
    <property type="match status" value="1"/>
</dbReference>
<dbReference type="Gene3D" id="3.40.50.150">
    <property type="entry name" value="Vaccinia Virus protein VP39"/>
    <property type="match status" value="1"/>
</dbReference>
<dbReference type="HAMAP" id="MF_01579">
    <property type="entry name" value="16SrRNA_methyltr_F"/>
    <property type="match status" value="1"/>
</dbReference>
<dbReference type="InterPro" id="IPR031341">
    <property type="entry name" value="Methyltr_RsmF_N"/>
</dbReference>
<dbReference type="InterPro" id="IPR049560">
    <property type="entry name" value="MeTrfase_RsmB-F_NOP2_cat"/>
</dbReference>
<dbReference type="InterPro" id="IPR001678">
    <property type="entry name" value="MeTrfase_RsmB-F_NOP2_dom"/>
</dbReference>
<dbReference type="InterPro" id="IPR027391">
    <property type="entry name" value="Nol1_Nop2_Fmu_2"/>
</dbReference>
<dbReference type="InterPro" id="IPR011023">
    <property type="entry name" value="Nop2p"/>
</dbReference>
<dbReference type="InterPro" id="IPR023267">
    <property type="entry name" value="RCMT"/>
</dbReference>
<dbReference type="InterPro" id="IPR023545">
    <property type="entry name" value="rRNA_ssu_MeTfrase_F"/>
</dbReference>
<dbReference type="InterPro" id="IPR029063">
    <property type="entry name" value="SAM-dependent_MTases_sf"/>
</dbReference>
<dbReference type="InterPro" id="IPR048457">
    <property type="entry name" value="YebU_pre-PUA_dom"/>
</dbReference>
<dbReference type="NCBIfam" id="TIGR00446">
    <property type="entry name" value="nop2p"/>
    <property type="match status" value="1"/>
</dbReference>
<dbReference type="NCBIfam" id="NF008898">
    <property type="entry name" value="PRK11933.1"/>
    <property type="match status" value="1"/>
</dbReference>
<dbReference type="PANTHER" id="PTHR22807:SF30">
    <property type="entry name" value="28S RRNA (CYTOSINE(4447)-C(5))-METHYLTRANSFERASE-RELATED"/>
    <property type="match status" value="1"/>
</dbReference>
<dbReference type="PANTHER" id="PTHR22807">
    <property type="entry name" value="NOP2 YEAST -RELATED NOL1/NOP2/FMU SUN DOMAIN-CONTAINING"/>
    <property type="match status" value="1"/>
</dbReference>
<dbReference type="Pfam" id="PF01189">
    <property type="entry name" value="Methyltr_RsmB-F"/>
    <property type="match status" value="1"/>
</dbReference>
<dbReference type="Pfam" id="PF17125">
    <property type="entry name" value="Methyltr_RsmF_N"/>
    <property type="match status" value="1"/>
</dbReference>
<dbReference type="Pfam" id="PF13636">
    <property type="entry name" value="Methyltranf_PUA"/>
    <property type="match status" value="1"/>
</dbReference>
<dbReference type="Pfam" id="PF21150">
    <property type="entry name" value="YebU_pre-PUA_dom"/>
    <property type="match status" value="1"/>
</dbReference>
<dbReference type="PRINTS" id="PR02008">
    <property type="entry name" value="RCMTFAMILY"/>
</dbReference>
<dbReference type="SUPFAM" id="SSF53335">
    <property type="entry name" value="S-adenosyl-L-methionine-dependent methyltransferases"/>
    <property type="match status" value="1"/>
</dbReference>
<dbReference type="PROSITE" id="PS51686">
    <property type="entry name" value="SAM_MT_RSMB_NOP"/>
    <property type="match status" value="1"/>
</dbReference>
<organism>
    <name type="scientific">Shewanella frigidimarina (strain NCIMB 400)</name>
    <dbReference type="NCBI Taxonomy" id="318167"/>
    <lineage>
        <taxon>Bacteria</taxon>
        <taxon>Pseudomonadati</taxon>
        <taxon>Pseudomonadota</taxon>
        <taxon>Gammaproteobacteria</taxon>
        <taxon>Alteromonadales</taxon>
        <taxon>Shewanellaceae</taxon>
        <taxon>Shewanella</taxon>
    </lineage>
</organism>
<gene>
    <name evidence="1" type="primary">rsmF</name>
    <name type="ordered locus">Sfri_2236</name>
</gene>
<keyword id="KW-0963">Cytoplasm</keyword>
<keyword id="KW-0489">Methyltransferase</keyword>
<keyword id="KW-1185">Reference proteome</keyword>
<keyword id="KW-0694">RNA-binding</keyword>
<keyword id="KW-0698">rRNA processing</keyword>
<keyword id="KW-0949">S-adenosyl-L-methionine</keyword>
<keyword id="KW-0808">Transferase</keyword>
<proteinExistence type="inferred from homology"/>
<reference key="1">
    <citation type="submission" date="2006-08" db="EMBL/GenBank/DDBJ databases">
        <title>Complete sequence of Shewanella frigidimarina NCIMB 400.</title>
        <authorList>
            <consortium name="US DOE Joint Genome Institute"/>
            <person name="Copeland A."/>
            <person name="Lucas S."/>
            <person name="Lapidus A."/>
            <person name="Barry K."/>
            <person name="Detter J.C."/>
            <person name="Glavina del Rio T."/>
            <person name="Hammon N."/>
            <person name="Israni S."/>
            <person name="Dalin E."/>
            <person name="Tice H."/>
            <person name="Pitluck S."/>
            <person name="Fredrickson J.K."/>
            <person name="Kolker E."/>
            <person name="McCuel L.A."/>
            <person name="DiChristina T."/>
            <person name="Nealson K.H."/>
            <person name="Newman D."/>
            <person name="Tiedje J.M."/>
            <person name="Zhou J."/>
            <person name="Romine M.F."/>
            <person name="Culley D.E."/>
            <person name="Serres M."/>
            <person name="Chertkov O."/>
            <person name="Brettin T."/>
            <person name="Bruce D."/>
            <person name="Han C."/>
            <person name="Tapia R."/>
            <person name="Gilna P."/>
            <person name="Schmutz J."/>
            <person name="Larimer F."/>
            <person name="Land M."/>
            <person name="Hauser L."/>
            <person name="Kyrpides N."/>
            <person name="Mikhailova N."/>
            <person name="Richardson P."/>
        </authorList>
    </citation>
    <scope>NUCLEOTIDE SEQUENCE [LARGE SCALE GENOMIC DNA]</scope>
    <source>
        <strain>NCIMB 400</strain>
    </source>
</reference>
<evidence type="ECO:0000255" key="1">
    <source>
        <dbReference type="HAMAP-Rule" id="MF_01579"/>
    </source>
</evidence>